<reference evidence="7 9" key="1">
    <citation type="journal article" date="2003" name="Mol. Biol. Cell">
        <title>Acroplaxome, an F-actin-keratin-containing plate, anchors the acrosome to the nucleus during shaping of the spermatid head.</title>
        <authorList>
            <person name="Kierszenbaum A.L."/>
            <person name="Rivkin E."/>
            <person name="Tres L.L."/>
        </authorList>
    </citation>
    <scope>NUCLEOTIDE SEQUENCE [MRNA]</scope>
    <scope>TISSUE SPECIFICITY</scope>
    <source>
        <strain evidence="9">Sprague-Dawley</strain>
    </source>
</reference>
<reference key="2">
    <citation type="journal article" date="2004" name="Genome Res.">
        <title>The status, quality, and expansion of the NIH full-length cDNA project: the Mammalian Gene Collection (MGC).</title>
        <authorList>
            <consortium name="The MGC Project Team"/>
        </authorList>
    </citation>
    <scope>NUCLEOTIDE SEQUENCE [LARGE SCALE MRNA]</scope>
    <source>
        <tissue>Prostate</tissue>
    </source>
</reference>
<reference key="3">
    <citation type="journal article" date="2012" name="Nat. Commun.">
        <title>Quantitative maps of protein phosphorylation sites across 14 different rat organs and tissues.</title>
        <authorList>
            <person name="Lundby A."/>
            <person name="Secher A."/>
            <person name="Lage K."/>
            <person name="Nordsborg N.B."/>
            <person name="Dmytriyev A."/>
            <person name="Lundby C."/>
            <person name="Olsen J.V."/>
        </authorList>
    </citation>
    <scope>PHOSPHORYLATION [LARGE SCALE ANALYSIS] AT SER-5; SER-8; SER-16; SER-21; SER-36; SER-60; SER-67; SER-71; SER-74 AND SER-78</scope>
    <scope>IDENTIFICATION BY MASS SPECTROMETRY [LARGE SCALE ANALYSIS]</scope>
</reference>
<feature type="chain" id="PRO_0000063729" description="Keratin, type II cytoskeletal 5">
    <location>
        <begin position="1"/>
        <end position="576"/>
    </location>
</feature>
<feature type="domain" description="IF rod" evidence="4">
    <location>
        <begin position="164"/>
        <end position="477"/>
    </location>
</feature>
<feature type="region of interest" description="Head" evidence="3">
    <location>
        <begin position="1"/>
        <end position="163"/>
    </location>
</feature>
<feature type="region of interest" description="Coil 1A" evidence="3">
    <location>
        <begin position="164"/>
        <end position="199"/>
    </location>
</feature>
<feature type="region of interest" description="Linker 1" evidence="3">
    <location>
        <begin position="200"/>
        <end position="218"/>
    </location>
</feature>
<feature type="region of interest" description="Coil 1B" evidence="3">
    <location>
        <begin position="219"/>
        <end position="311"/>
    </location>
</feature>
<feature type="region of interest" description="Linker 12" evidence="3">
    <location>
        <begin position="312"/>
        <end position="334"/>
    </location>
</feature>
<feature type="region of interest" description="Coil 2" evidence="3">
    <location>
        <begin position="335"/>
        <end position="473"/>
    </location>
</feature>
<feature type="region of interest" description="Tail" evidence="3">
    <location>
        <begin position="474"/>
        <end position="576"/>
    </location>
</feature>
<feature type="region of interest" description="Disordered" evidence="5">
    <location>
        <begin position="540"/>
        <end position="576"/>
    </location>
</feature>
<feature type="compositionally biased region" description="Gly residues" evidence="5">
    <location>
        <begin position="540"/>
        <end position="557"/>
    </location>
</feature>
<feature type="compositionally biased region" description="Low complexity" evidence="5">
    <location>
        <begin position="558"/>
        <end position="576"/>
    </location>
</feature>
<feature type="site" description="Stutter" evidence="3">
    <location>
        <position position="413"/>
    </location>
</feature>
<feature type="modified residue" description="Phosphoserine" evidence="10">
    <location>
        <position position="5"/>
    </location>
</feature>
<feature type="modified residue" description="Phosphoserine" evidence="10">
    <location>
        <position position="8"/>
    </location>
</feature>
<feature type="modified residue" description="Phosphoserine" evidence="10">
    <location>
        <position position="16"/>
    </location>
</feature>
<feature type="modified residue" description="Phosphoserine" evidence="10">
    <location>
        <position position="21"/>
    </location>
</feature>
<feature type="modified residue" description="Phosphothreonine; by CDK1" evidence="2">
    <location>
        <position position="24"/>
    </location>
</feature>
<feature type="modified residue" description="Phosphoserine" evidence="2">
    <location>
        <position position="26"/>
    </location>
</feature>
<feature type="modified residue" description="Phosphoserine" evidence="10">
    <location>
        <position position="36"/>
    </location>
</feature>
<feature type="modified residue" description="Phosphoserine" evidence="2">
    <location>
        <position position="46"/>
    </location>
</feature>
<feature type="modified residue" description="Phosphoserine" evidence="10">
    <location>
        <position position="60"/>
    </location>
</feature>
<feature type="modified residue" description="Phosphoserine" evidence="10">
    <location>
        <position position="67"/>
    </location>
</feature>
<feature type="modified residue" description="Phosphoserine" evidence="10">
    <location>
        <position position="71"/>
    </location>
</feature>
<feature type="modified residue" description="Phosphoserine" evidence="10">
    <location>
        <position position="74"/>
    </location>
</feature>
<feature type="modified residue" description="Phosphoserine" evidence="10">
    <location>
        <position position="78"/>
    </location>
</feature>
<feature type="modified residue" description="Phosphothreonine; by CDK1" evidence="2">
    <location>
        <position position="147"/>
    </location>
</feature>
<feature type="modified residue" description="Phosphothreonine; by AURKB" evidence="2">
    <location>
        <position position="162"/>
    </location>
</feature>
<feature type="modified residue" description="Omega-N-methylarginine" evidence="2">
    <location>
        <position position="527"/>
    </location>
</feature>
<feature type="sequence conflict" description="In Ref. 1; AAQ20893." evidence="7" ref="1">
    <original>G</original>
    <variation>R</variation>
    <location>
        <position position="114"/>
    </location>
</feature>
<feature type="sequence conflict" description="In Ref. 1; AAQ20893." evidence="7" ref="1">
    <original>E</original>
    <variation>Q</variation>
    <location>
        <position position="473"/>
    </location>
</feature>
<feature type="sequence conflict" description="In Ref. 1; AAQ20893." evidence="7" ref="1">
    <original>S</original>
    <variation>F</variation>
    <location>
        <position position="508"/>
    </location>
</feature>
<feature type="sequence conflict" description="In Ref. 1; AAQ20893." evidence="7" ref="1">
    <original>R</original>
    <variation>L</variation>
    <location>
        <position position="528"/>
    </location>
</feature>
<feature type="sequence conflict" description="In Ref. 1; AAQ20893." evidence="7" ref="1">
    <original>K</original>
    <variation>Q</variation>
    <location>
        <position position="562"/>
    </location>
</feature>
<feature type="sequence conflict" description="In Ref. 1; AAQ20893." evidence="7" ref="1">
    <original>K</original>
    <variation>N</variation>
    <location>
        <position position="575"/>
    </location>
</feature>
<evidence type="ECO:0000250" key="1">
    <source>
        <dbReference type="UniProtKB" id="P13647"/>
    </source>
</evidence>
<evidence type="ECO:0000250" key="2">
    <source>
        <dbReference type="UniProtKB" id="Q922U2"/>
    </source>
</evidence>
<evidence type="ECO:0000255" key="3"/>
<evidence type="ECO:0000255" key="4">
    <source>
        <dbReference type="PROSITE-ProRule" id="PRU01188"/>
    </source>
</evidence>
<evidence type="ECO:0000256" key="5">
    <source>
        <dbReference type="SAM" id="MobiDB-lite"/>
    </source>
</evidence>
<evidence type="ECO:0000269" key="6">
    <source>
    </source>
</evidence>
<evidence type="ECO:0000305" key="7"/>
<evidence type="ECO:0000312" key="8">
    <source>
        <dbReference type="EMBL" id="AAH62086.1"/>
    </source>
</evidence>
<evidence type="ECO:0000312" key="9">
    <source>
        <dbReference type="EMBL" id="AAQ20893.1"/>
    </source>
</evidence>
<evidence type="ECO:0007744" key="10">
    <source>
    </source>
</evidence>
<comment type="function">
    <text evidence="2">Required for the formation of keratin intermediate filaments in the basal epidermis and maintenance of the skin barrier in response to mechanical stress (By similarity). Regulates the recruitment of Langerhans cells to the epidermis, potentially by modulation of the abundance of macrophage chemotactic cytokines, macrophage inflammatory cytokines and CTNND1 localization in keratinocytes (By similarity).</text>
</comment>
<comment type="subunit">
    <text evidence="1 2">Heterodimer of a type I and a type II keratin. Heterodimer with type I keratin KRT25 leading to the formation of keratin intermediate filament (KIF) network (By similarity). Forms a heterodimer (via 2B domains) with KRT14 (via 2B domains) (By similarity). Interacts with TCHP (By similarity). Interacts with EPPK1 (By similarity). Interacts with AMELX (By similarity). Interacts with PKP1 (via N-terminus) and PKP2 (By similarity).</text>
</comment>
<comment type="subcellular location">
    <subcellularLocation>
        <location evidence="2">Cytoplasm</location>
    </subcellularLocation>
</comment>
<comment type="tissue specificity">
    <text evidence="6">Expressed in the epidermis (at protein level) and testis (within pachytene spermatocytes).</text>
</comment>
<comment type="PTM">
    <text evidence="2">Phosphorylated by CDK1, AURKB and Rho-kinase, phosphorylation is regulated by the cell cycle (By similarity). Thr-24 phosphorylation, mediated by CDK1, peaks during prometaphase or metaphase cells with phosphorylated filamentous structures evident throughout the cytoplasm during early mitosis (By similarity). CDK1 phosphorylates Thr-24 in mitotic cells at the site of injury (By similarity).</text>
</comment>
<comment type="PTM">
    <text evidence="2">O-glycosylated.</text>
</comment>
<comment type="miscellaneous">
    <text>There are two types of cytoskeletal and microfibrillar keratin: I (acidic; 40-55 kDa) and II (neutral to basic; 56-70 kDa).</text>
</comment>
<comment type="similarity">
    <text evidence="4">Belongs to the intermediate filament family.</text>
</comment>
<organism>
    <name type="scientific">Rattus norvegicus</name>
    <name type="common">Rat</name>
    <dbReference type="NCBI Taxonomy" id="10116"/>
    <lineage>
        <taxon>Eukaryota</taxon>
        <taxon>Metazoa</taxon>
        <taxon>Chordata</taxon>
        <taxon>Craniata</taxon>
        <taxon>Vertebrata</taxon>
        <taxon>Euteleostomi</taxon>
        <taxon>Mammalia</taxon>
        <taxon>Eutheria</taxon>
        <taxon>Euarchontoglires</taxon>
        <taxon>Glires</taxon>
        <taxon>Rodentia</taxon>
        <taxon>Myomorpha</taxon>
        <taxon>Muroidea</taxon>
        <taxon>Muridae</taxon>
        <taxon>Murinae</taxon>
        <taxon>Rattus</taxon>
    </lineage>
</organism>
<name>K2C5_RAT</name>
<protein>
    <recommendedName>
        <fullName>Keratin, type II cytoskeletal 5</fullName>
    </recommendedName>
    <alternativeName>
        <fullName>Cytokeratin-5</fullName>
        <shortName>CK-5</shortName>
    </alternativeName>
    <alternativeName>
        <fullName>Keratin-5</fullName>
        <shortName>K5</shortName>
    </alternativeName>
    <alternativeName>
        <fullName>Type-II keratin Kb5</fullName>
    </alternativeName>
</protein>
<keyword id="KW-0175">Coiled coil</keyword>
<keyword id="KW-0963">Cytoplasm</keyword>
<keyword id="KW-0403">Intermediate filament</keyword>
<keyword id="KW-0416">Keratin</keyword>
<keyword id="KW-0488">Methylation</keyword>
<keyword id="KW-0597">Phosphoprotein</keyword>
<keyword id="KW-1185">Reference proteome</keyword>
<dbReference type="EMBL" id="AY342389">
    <property type="protein sequence ID" value="AAQ20893.1"/>
    <property type="molecule type" value="mRNA"/>
</dbReference>
<dbReference type="EMBL" id="BC062086">
    <property type="protein sequence ID" value="AAH62086.1"/>
    <property type="molecule type" value="mRNA"/>
</dbReference>
<dbReference type="RefSeq" id="NP_899162.2">
    <property type="nucleotide sequence ID" value="NM_183333.2"/>
</dbReference>
<dbReference type="SMR" id="Q6P6Q2"/>
<dbReference type="BioGRID" id="266785">
    <property type="interactions" value="2"/>
</dbReference>
<dbReference type="FunCoup" id="Q6P6Q2">
    <property type="interactions" value="55"/>
</dbReference>
<dbReference type="STRING" id="10116.ENSRNOP00000073248"/>
<dbReference type="GlyGen" id="Q6P6Q2">
    <property type="glycosylation" value="2 sites, 1 O-linked glycan (1 site)"/>
</dbReference>
<dbReference type="iPTMnet" id="Q6P6Q2"/>
<dbReference type="PhosphoSitePlus" id="Q6P6Q2"/>
<dbReference type="PaxDb" id="10116-ENSRNOP00000011644"/>
<dbReference type="Ensembl" id="ENSRNOT00000011644.6">
    <property type="protein sequence ID" value="ENSRNOP00000011644.6"/>
    <property type="gene ID" value="ENSRNOG00000050420.3"/>
</dbReference>
<dbReference type="GeneID" id="369017"/>
<dbReference type="KEGG" id="rno:369017"/>
<dbReference type="AGR" id="RGD:727894"/>
<dbReference type="CTD" id="3852"/>
<dbReference type="RGD" id="727894">
    <property type="gene designation" value="Krt5"/>
</dbReference>
<dbReference type="eggNOG" id="ENOG502QURK">
    <property type="taxonomic scope" value="Eukaryota"/>
</dbReference>
<dbReference type="GeneTree" id="ENSGT00940000160458"/>
<dbReference type="InParanoid" id="Q6P6Q2"/>
<dbReference type="OMA" id="SWYQTKX"/>
<dbReference type="OrthoDB" id="2441647at2759"/>
<dbReference type="PhylomeDB" id="Q6P6Q2"/>
<dbReference type="Reactome" id="R-RNO-446107">
    <property type="pathway name" value="Type I hemidesmosome assembly"/>
</dbReference>
<dbReference type="Reactome" id="R-RNO-6805567">
    <property type="pathway name" value="Keratinization"/>
</dbReference>
<dbReference type="Reactome" id="R-RNO-6809371">
    <property type="pathway name" value="Formation of the cornified envelope"/>
</dbReference>
<dbReference type="PRO" id="PR:Q6P6Q2"/>
<dbReference type="Proteomes" id="UP000002494">
    <property type="component" value="Chromosome 7"/>
</dbReference>
<dbReference type="GO" id="GO:0001533">
    <property type="term" value="C:cornified envelope"/>
    <property type="evidence" value="ECO:0000266"/>
    <property type="project" value="RGD"/>
</dbReference>
<dbReference type="GO" id="GO:0005737">
    <property type="term" value="C:cytoplasm"/>
    <property type="evidence" value="ECO:0000250"/>
    <property type="project" value="UniProtKB"/>
</dbReference>
<dbReference type="GO" id="GO:0005882">
    <property type="term" value="C:intermediate filament"/>
    <property type="evidence" value="ECO:0000266"/>
    <property type="project" value="RGD"/>
</dbReference>
<dbReference type="GO" id="GO:0045095">
    <property type="term" value="C:keratin filament"/>
    <property type="evidence" value="ECO:0000314"/>
    <property type="project" value="RGD"/>
</dbReference>
<dbReference type="GO" id="GO:0005886">
    <property type="term" value="C:plasma membrane"/>
    <property type="evidence" value="ECO:0000266"/>
    <property type="project" value="RGD"/>
</dbReference>
<dbReference type="GO" id="GO:0097110">
    <property type="term" value="F:scaffold protein binding"/>
    <property type="evidence" value="ECO:0000266"/>
    <property type="project" value="RGD"/>
</dbReference>
<dbReference type="GO" id="GO:0030280">
    <property type="term" value="F:structural constituent of skin epidermis"/>
    <property type="evidence" value="ECO:0000318"/>
    <property type="project" value="GO_Central"/>
</dbReference>
<dbReference type="GO" id="GO:0045109">
    <property type="term" value="P:intermediate filament organization"/>
    <property type="evidence" value="ECO:0000318"/>
    <property type="project" value="GO_Central"/>
</dbReference>
<dbReference type="GO" id="GO:0045107">
    <property type="term" value="P:intermediate filament polymerization"/>
    <property type="evidence" value="ECO:0000250"/>
    <property type="project" value="UniProtKB"/>
</dbReference>
<dbReference type="GO" id="GO:0031424">
    <property type="term" value="P:keratinization"/>
    <property type="evidence" value="ECO:0000318"/>
    <property type="project" value="GO_Central"/>
</dbReference>
<dbReference type="GO" id="GO:0030334">
    <property type="term" value="P:regulation of cell migration"/>
    <property type="evidence" value="ECO:0000250"/>
    <property type="project" value="UniProtKB"/>
</dbReference>
<dbReference type="GO" id="GO:0032880">
    <property type="term" value="P:regulation of protein localization"/>
    <property type="evidence" value="ECO:0000250"/>
    <property type="project" value="UniProtKB"/>
</dbReference>
<dbReference type="GO" id="GO:0009612">
    <property type="term" value="P:response to mechanical stimulus"/>
    <property type="evidence" value="ECO:0000250"/>
    <property type="project" value="UniProtKB"/>
</dbReference>
<dbReference type="FunFam" id="1.20.5.1160:FF:000001">
    <property type="entry name" value="Keratin type II"/>
    <property type="match status" value="1"/>
</dbReference>
<dbReference type="FunFam" id="1.20.5.170:FF:000004">
    <property type="entry name" value="Keratin, type II cytoskeletal 5"/>
    <property type="match status" value="1"/>
</dbReference>
<dbReference type="FunFam" id="1.20.5.500:FF:000001">
    <property type="entry name" value="Type II keratin 23"/>
    <property type="match status" value="1"/>
</dbReference>
<dbReference type="Gene3D" id="1.20.5.170">
    <property type="match status" value="1"/>
</dbReference>
<dbReference type="Gene3D" id="1.20.5.500">
    <property type="entry name" value="Single helix bin"/>
    <property type="match status" value="1"/>
</dbReference>
<dbReference type="Gene3D" id="1.20.5.1160">
    <property type="entry name" value="Vasodilator-stimulated phosphoprotein"/>
    <property type="match status" value="1"/>
</dbReference>
<dbReference type="InterPro" id="IPR018039">
    <property type="entry name" value="IF_conserved"/>
</dbReference>
<dbReference type="InterPro" id="IPR039008">
    <property type="entry name" value="IF_rod_dom"/>
</dbReference>
<dbReference type="InterPro" id="IPR032444">
    <property type="entry name" value="Keratin_2_head"/>
</dbReference>
<dbReference type="InterPro" id="IPR003054">
    <property type="entry name" value="Keratin_II"/>
</dbReference>
<dbReference type="PANTHER" id="PTHR45616">
    <property type="entry name" value="GATA-TYPE DOMAIN-CONTAINING PROTEIN"/>
    <property type="match status" value="1"/>
</dbReference>
<dbReference type="PANTHER" id="PTHR45616:SF32">
    <property type="entry name" value="KERATIN, TYPE II CYTOSKELETAL 5"/>
    <property type="match status" value="1"/>
</dbReference>
<dbReference type="Pfam" id="PF00038">
    <property type="entry name" value="Filament"/>
    <property type="match status" value="1"/>
</dbReference>
<dbReference type="Pfam" id="PF16208">
    <property type="entry name" value="Keratin_2_head"/>
    <property type="match status" value="1"/>
</dbReference>
<dbReference type="PRINTS" id="PR01276">
    <property type="entry name" value="TYPE2KERATIN"/>
</dbReference>
<dbReference type="SMART" id="SM01391">
    <property type="entry name" value="Filament"/>
    <property type="match status" value="1"/>
</dbReference>
<dbReference type="SUPFAM" id="SSF64593">
    <property type="entry name" value="Intermediate filament protein, coiled coil region"/>
    <property type="match status" value="3"/>
</dbReference>
<dbReference type="PROSITE" id="PS00226">
    <property type="entry name" value="IF_ROD_1"/>
    <property type="match status" value="1"/>
</dbReference>
<dbReference type="PROSITE" id="PS51842">
    <property type="entry name" value="IF_ROD_2"/>
    <property type="match status" value="1"/>
</dbReference>
<sequence>MSRQSSVSFRSGGSRSFSAASAITPSVSRTTFSSVSRSGGGGGRVSLGGAYGAGGYGSRSLYNVGGSKRISFSSGGGSFRNQFGAGAGGGYGFGGGAGSGFGFGGGAGSGFGFGGGAGFGGGYGGAGFPVCPPGGIQEVTVNQNLLTPLNLQIDPTIQRVRTEEREQIKTLNNKFASFIDKVRFLEQQNKVLDTKWTLLQEQGTKTIKQNLDPLFEQYINNLRRQLDGVMGERGRLDSELRNMQDLVEDYKNKYEDEINKRTTAENEFVMLKKDVDAAYMNKVELEAKVDALMDEINFMKMFFDAELSQMQTHVSDTSVVLSMDNNRSLDLDSIIAEVKAQYEDIANRSRTEAESWYQTKYEELQQTAGRHGDDLRNTKHEISEMNRMIQRLRSEIDNVKKQCANLQNAIAEAEQRGELALKDARNKLTELEEALQKAKQDMARLLREYQELMNTKLALDVEIATYRKLLEGEECRLSGEGVGPVNISVVTNSLSSGYGGRSNIGYGSGLGSGIGGFASDIGPLLNRRGLGSGLSVGGSGFSASSGQGGGFSSGGGSSSSVKFVSTTSSSRRSFKS</sequence>
<proteinExistence type="evidence at protein level"/>
<gene>
    <name evidence="1" type="primary">Krt5</name>
    <name evidence="8" type="synonym">Krt2-5</name>
</gene>
<accession>Q6P6Q2</accession>
<accession>Q7TN97</accession>